<feature type="chain" id="PRO_0000070398" description="Aldo-keto reductase yakc [NADP(+)]">
    <location>
        <begin position="1"/>
        <end position="340"/>
    </location>
</feature>
<feature type="active site" description="Proton donor" evidence="1">
    <location>
        <position position="56"/>
    </location>
</feature>
<feature type="binding site" evidence="1">
    <location>
        <position position="126"/>
    </location>
    <ligand>
        <name>substrate</name>
    </ligand>
</feature>
<feature type="binding site" evidence="1">
    <location>
        <begin position="208"/>
        <end position="218"/>
    </location>
    <ligand>
        <name>NADP(+)</name>
        <dbReference type="ChEBI" id="CHEBI:58349"/>
    </ligand>
</feature>
<feature type="site" description="Lowers pKa of active site Tyr" evidence="1">
    <location>
        <position position="83"/>
    </location>
</feature>
<accession>Q09923</accession>
<evidence type="ECO:0000250" key="1"/>
<evidence type="ECO:0000269" key="2">
    <source>
    </source>
</evidence>
<evidence type="ECO:0000305" key="3"/>
<name>YAKC_SCHPO</name>
<gene>
    <name type="primary">yakc</name>
    <name type="ORF">SPAC1F7.12</name>
    <name type="ORF">SPAC21E11.01</name>
</gene>
<dbReference type="EC" id="1.1.1.-"/>
<dbReference type="EMBL" id="CU329670">
    <property type="protein sequence ID" value="CAA91959.1"/>
    <property type="molecule type" value="Genomic_DNA"/>
</dbReference>
<dbReference type="PIR" id="S62584">
    <property type="entry name" value="S62584"/>
</dbReference>
<dbReference type="RefSeq" id="NP_594498.1">
    <property type="nucleotide sequence ID" value="NM_001019927.2"/>
</dbReference>
<dbReference type="SMR" id="Q09923"/>
<dbReference type="FunCoup" id="Q09923">
    <property type="interactions" value="426"/>
</dbReference>
<dbReference type="STRING" id="284812.Q09923"/>
<dbReference type="PaxDb" id="4896-SPAC1F7.12.1"/>
<dbReference type="EnsemblFungi" id="SPAC1F7.12.1">
    <property type="protein sequence ID" value="SPAC1F7.12.1:pep"/>
    <property type="gene ID" value="SPAC1F7.12"/>
</dbReference>
<dbReference type="GeneID" id="2541648"/>
<dbReference type="KEGG" id="spo:2541648"/>
<dbReference type="PomBase" id="SPAC1F7.12"/>
<dbReference type="VEuPathDB" id="FungiDB:SPAC1F7.12"/>
<dbReference type="eggNOG" id="KOG1575">
    <property type="taxonomic scope" value="Eukaryota"/>
</dbReference>
<dbReference type="HOGENOM" id="CLU_023205_2_1_1"/>
<dbReference type="InParanoid" id="Q09923"/>
<dbReference type="OMA" id="GPHHNEE"/>
<dbReference type="PhylomeDB" id="Q09923"/>
<dbReference type="PRO" id="PR:Q09923"/>
<dbReference type="Proteomes" id="UP000002485">
    <property type="component" value="Chromosome I"/>
</dbReference>
<dbReference type="GO" id="GO:0005737">
    <property type="term" value="C:cytoplasm"/>
    <property type="evidence" value="ECO:0000318"/>
    <property type="project" value="GO_Central"/>
</dbReference>
<dbReference type="GO" id="GO:0005829">
    <property type="term" value="C:cytosol"/>
    <property type="evidence" value="ECO:0007005"/>
    <property type="project" value="PomBase"/>
</dbReference>
<dbReference type="GO" id="GO:0005634">
    <property type="term" value="C:nucleus"/>
    <property type="evidence" value="ECO:0007005"/>
    <property type="project" value="PomBase"/>
</dbReference>
<dbReference type="GO" id="GO:0004033">
    <property type="term" value="F:aldo-keto reductase (NADPH) activity"/>
    <property type="evidence" value="ECO:0000318"/>
    <property type="project" value="GO_Central"/>
</dbReference>
<dbReference type="GO" id="GO:0016614">
    <property type="term" value="F:oxidoreductase activity, acting on CH-OH group of donors"/>
    <property type="evidence" value="ECO:0000314"/>
    <property type="project" value="PomBase"/>
</dbReference>
<dbReference type="CDD" id="cd19144">
    <property type="entry name" value="AKR_AKR13A1"/>
    <property type="match status" value="1"/>
</dbReference>
<dbReference type="FunFam" id="3.20.20.100:FF:000048">
    <property type="entry name" value="Probable aldo-keto reductase 4"/>
    <property type="match status" value="1"/>
</dbReference>
<dbReference type="Gene3D" id="3.20.20.100">
    <property type="entry name" value="NADP-dependent oxidoreductase domain"/>
    <property type="match status" value="1"/>
</dbReference>
<dbReference type="InterPro" id="IPR050791">
    <property type="entry name" value="Aldo-Keto_reductase"/>
</dbReference>
<dbReference type="InterPro" id="IPR023210">
    <property type="entry name" value="NADP_OxRdtase_dom"/>
</dbReference>
<dbReference type="InterPro" id="IPR036812">
    <property type="entry name" value="NADP_OxRdtase_dom_sf"/>
</dbReference>
<dbReference type="PANTHER" id="PTHR43625">
    <property type="entry name" value="AFLATOXIN B1 ALDEHYDE REDUCTASE"/>
    <property type="match status" value="1"/>
</dbReference>
<dbReference type="PANTHER" id="PTHR43625:SF40">
    <property type="entry name" value="ALDO-KETO REDUCTASE YAKC [NADP(+)]"/>
    <property type="match status" value="1"/>
</dbReference>
<dbReference type="Pfam" id="PF00248">
    <property type="entry name" value="Aldo_ket_red"/>
    <property type="match status" value="1"/>
</dbReference>
<dbReference type="SUPFAM" id="SSF51430">
    <property type="entry name" value="NAD(P)-linked oxidoreductase"/>
    <property type="match status" value="1"/>
</dbReference>
<keyword id="KW-0903">Direct protein sequencing</keyword>
<keyword id="KW-0521">NADP</keyword>
<keyword id="KW-0560">Oxidoreductase</keyword>
<keyword id="KW-1185">Reference proteome</keyword>
<comment type="subunit">
    <text evidence="2">Monomer.</text>
</comment>
<comment type="similarity">
    <text evidence="3">Belongs to the aldo/keto reductase family. Aldo/keto reductase 2 subfamily.</text>
</comment>
<reference key="1">
    <citation type="journal article" date="2002" name="J. Biochem.">
        <title>Characterization of recombinant YakC of Schizosaccharomyces pombe showing YakC defines a new family of aldo-keto reductases.</title>
        <authorList>
            <person name="Morita T."/>
            <person name="Huruta T."/>
            <person name="Ashiuchi M."/>
            <person name="Yagi T."/>
        </authorList>
    </citation>
    <scope>NUCLEOTIDE SEQUENCE [GENOMIC DNA]</scope>
    <scope>PROTEIN SEQUENCE OF 34-56; 78-87; 89-113; 147-157; 179-187; 191-224; 228-247; 289-311 AND 318-340</scope>
    <scope>HYDROGEN DONOR</scope>
    <scope>SUBUNIT</scope>
</reference>
<reference key="2">
    <citation type="journal article" date="2002" name="Nature">
        <title>The genome sequence of Schizosaccharomyces pombe.</title>
        <authorList>
            <person name="Wood V."/>
            <person name="Gwilliam R."/>
            <person name="Rajandream M.A."/>
            <person name="Lyne M.H."/>
            <person name="Lyne R."/>
            <person name="Stewart A."/>
            <person name="Sgouros J.G."/>
            <person name="Peat N."/>
            <person name="Hayles J."/>
            <person name="Baker S.G."/>
            <person name="Basham D."/>
            <person name="Bowman S."/>
            <person name="Brooks K."/>
            <person name="Brown D."/>
            <person name="Brown S."/>
            <person name="Chillingworth T."/>
            <person name="Churcher C.M."/>
            <person name="Collins M."/>
            <person name="Connor R."/>
            <person name="Cronin A."/>
            <person name="Davis P."/>
            <person name="Feltwell T."/>
            <person name="Fraser A."/>
            <person name="Gentles S."/>
            <person name="Goble A."/>
            <person name="Hamlin N."/>
            <person name="Harris D.E."/>
            <person name="Hidalgo J."/>
            <person name="Hodgson G."/>
            <person name="Holroyd S."/>
            <person name="Hornsby T."/>
            <person name="Howarth S."/>
            <person name="Huckle E.J."/>
            <person name="Hunt S."/>
            <person name="Jagels K."/>
            <person name="James K.D."/>
            <person name="Jones L."/>
            <person name="Jones M."/>
            <person name="Leather S."/>
            <person name="McDonald S."/>
            <person name="McLean J."/>
            <person name="Mooney P."/>
            <person name="Moule S."/>
            <person name="Mungall K.L."/>
            <person name="Murphy L.D."/>
            <person name="Niblett D."/>
            <person name="Odell C."/>
            <person name="Oliver K."/>
            <person name="O'Neil S."/>
            <person name="Pearson D."/>
            <person name="Quail M.A."/>
            <person name="Rabbinowitsch E."/>
            <person name="Rutherford K.M."/>
            <person name="Rutter S."/>
            <person name="Saunders D."/>
            <person name="Seeger K."/>
            <person name="Sharp S."/>
            <person name="Skelton J."/>
            <person name="Simmonds M.N."/>
            <person name="Squares R."/>
            <person name="Squares S."/>
            <person name="Stevens K."/>
            <person name="Taylor K."/>
            <person name="Taylor R.G."/>
            <person name="Tivey A."/>
            <person name="Walsh S.V."/>
            <person name="Warren T."/>
            <person name="Whitehead S."/>
            <person name="Woodward J.R."/>
            <person name="Volckaert G."/>
            <person name="Aert R."/>
            <person name="Robben J."/>
            <person name="Grymonprez B."/>
            <person name="Weltjens I."/>
            <person name="Vanstreels E."/>
            <person name="Rieger M."/>
            <person name="Schaefer M."/>
            <person name="Mueller-Auer S."/>
            <person name="Gabel C."/>
            <person name="Fuchs M."/>
            <person name="Duesterhoeft A."/>
            <person name="Fritzc C."/>
            <person name="Holzer E."/>
            <person name="Moestl D."/>
            <person name="Hilbert H."/>
            <person name="Borzym K."/>
            <person name="Langer I."/>
            <person name="Beck A."/>
            <person name="Lehrach H."/>
            <person name="Reinhardt R."/>
            <person name="Pohl T.M."/>
            <person name="Eger P."/>
            <person name="Zimmermann W."/>
            <person name="Wedler H."/>
            <person name="Wambutt R."/>
            <person name="Purnelle B."/>
            <person name="Goffeau A."/>
            <person name="Cadieu E."/>
            <person name="Dreano S."/>
            <person name="Gloux S."/>
            <person name="Lelaure V."/>
            <person name="Mottier S."/>
            <person name="Galibert F."/>
            <person name="Aves S.J."/>
            <person name="Xiang Z."/>
            <person name="Hunt C."/>
            <person name="Moore K."/>
            <person name="Hurst S.M."/>
            <person name="Lucas M."/>
            <person name="Rochet M."/>
            <person name="Gaillardin C."/>
            <person name="Tallada V.A."/>
            <person name="Garzon A."/>
            <person name="Thode G."/>
            <person name="Daga R.R."/>
            <person name="Cruzado L."/>
            <person name="Jimenez J."/>
            <person name="Sanchez M."/>
            <person name="del Rey F."/>
            <person name="Benito J."/>
            <person name="Dominguez A."/>
            <person name="Revuelta J.L."/>
            <person name="Moreno S."/>
            <person name="Armstrong J."/>
            <person name="Forsburg S.L."/>
            <person name="Cerutti L."/>
            <person name="Lowe T."/>
            <person name="McCombie W.R."/>
            <person name="Paulsen I."/>
            <person name="Potashkin J."/>
            <person name="Shpakovski G.V."/>
            <person name="Ussery D."/>
            <person name="Barrell B.G."/>
            <person name="Nurse P."/>
        </authorList>
    </citation>
    <scope>NUCLEOTIDE SEQUENCE [LARGE SCALE GENOMIC DNA]</scope>
    <source>
        <strain>972 / ATCC 24843</strain>
    </source>
</reference>
<proteinExistence type="evidence at protein level"/>
<sequence length="340" mass="37710">MSIPTRKIGNDTVPAIGFGCMGLHAMYGPSSEEANQAVLTHAADLGCTFWDSSDMYGFGANEECIGRWFKQTGRRKEIFLATKFGYEKNPETGELSLNNEPDYIEKALDLSLKRLGIDCIDLYYVHRFSGETPIEKIMGALKKCVEAGKIRYIGLSECSANTIRRAAAVYPVSAVQVEYSPFSLEIERPEIGVMKACRENNITIVCYAPLGRGFLTGAYKSPDDFPEGDFRRKAPRYQKENFYKNLELVTKIEKIATANNITPGQLSLAWLLAQGDDILPIPGTKRVKYLEENFGALKVKLSDATVKEIREACDNAEVIGARYPPGAGSKIFMDTPPMPK</sequence>
<protein>
    <recommendedName>
        <fullName>Aldo-keto reductase yakc [NADP(+)]</fullName>
        <ecNumber>1.1.1.-</ecNumber>
    </recommendedName>
</protein>
<organism>
    <name type="scientific">Schizosaccharomyces pombe (strain 972 / ATCC 24843)</name>
    <name type="common">Fission yeast</name>
    <dbReference type="NCBI Taxonomy" id="284812"/>
    <lineage>
        <taxon>Eukaryota</taxon>
        <taxon>Fungi</taxon>
        <taxon>Dikarya</taxon>
        <taxon>Ascomycota</taxon>
        <taxon>Taphrinomycotina</taxon>
        <taxon>Schizosaccharomycetes</taxon>
        <taxon>Schizosaccharomycetales</taxon>
        <taxon>Schizosaccharomycetaceae</taxon>
        <taxon>Schizosaccharomyces</taxon>
    </lineage>
</organism>